<reference key="1">
    <citation type="journal article" date="2002" name="Nature">
        <title>The genome sequence of Schizosaccharomyces pombe.</title>
        <authorList>
            <person name="Wood V."/>
            <person name="Gwilliam R."/>
            <person name="Rajandream M.A."/>
            <person name="Lyne M.H."/>
            <person name="Lyne R."/>
            <person name="Stewart A."/>
            <person name="Sgouros J.G."/>
            <person name="Peat N."/>
            <person name="Hayles J."/>
            <person name="Baker S.G."/>
            <person name="Basham D."/>
            <person name="Bowman S."/>
            <person name="Brooks K."/>
            <person name="Brown D."/>
            <person name="Brown S."/>
            <person name="Chillingworth T."/>
            <person name="Churcher C.M."/>
            <person name="Collins M."/>
            <person name="Connor R."/>
            <person name="Cronin A."/>
            <person name="Davis P."/>
            <person name="Feltwell T."/>
            <person name="Fraser A."/>
            <person name="Gentles S."/>
            <person name="Goble A."/>
            <person name="Hamlin N."/>
            <person name="Harris D.E."/>
            <person name="Hidalgo J."/>
            <person name="Hodgson G."/>
            <person name="Holroyd S."/>
            <person name="Hornsby T."/>
            <person name="Howarth S."/>
            <person name="Huckle E.J."/>
            <person name="Hunt S."/>
            <person name="Jagels K."/>
            <person name="James K.D."/>
            <person name="Jones L."/>
            <person name="Jones M."/>
            <person name="Leather S."/>
            <person name="McDonald S."/>
            <person name="McLean J."/>
            <person name="Mooney P."/>
            <person name="Moule S."/>
            <person name="Mungall K.L."/>
            <person name="Murphy L.D."/>
            <person name="Niblett D."/>
            <person name="Odell C."/>
            <person name="Oliver K."/>
            <person name="O'Neil S."/>
            <person name="Pearson D."/>
            <person name="Quail M.A."/>
            <person name="Rabbinowitsch E."/>
            <person name="Rutherford K.M."/>
            <person name="Rutter S."/>
            <person name="Saunders D."/>
            <person name="Seeger K."/>
            <person name="Sharp S."/>
            <person name="Skelton J."/>
            <person name="Simmonds M.N."/>
            <person name="Squares R."/>
            <person name="Squares S."/>
            <person name="Stevens K."/>
            <person name="Taylor K."/>
            <person name="Taylor R.G."/>
            <person name="Tivey A."/>
            <person name="Walsh S.V."/>
            <person name="Warren T."/>
            <person name="Whitehead S."/>
            <person name="Woodward J.R."/>
            <person name="Volckaert G."/>
            <person name="Aert R."/>
            <person name="Robben J."/>
            <person name="Grymonprez B."/>
            <person name="Weltjens I."/>
            <person name="Vanstreels E."/>
            <person name="Rieger M."/>
            <person name="Schaefer M."/>
            <person name="Mueller-Auer S."/>
            <person name="Gabel C."/>
            <person name="Fuchs M."/>
            <person name="Duesterhoeft A."/>
            <person name="Fritzc C."/>
            <person name="Holzer E."/>
            <person name="Moestl D."/>
            <person name="Hilbert H."/>
            <person name="Borzym K."/>
            <person name="Langer I."/>
            <person name="Beck A."/>
            <person name="Lehrach H."/>
            <person name="Reinhardt R."/>
            <person name="Pohl T.M."/>
            <person name="Eger P."/>
            <person name="Zimmermann W."/>
            <person name="Wedler H."/>
            <person name="Wambutt R."/>
            <person name="Purnelle B."/>
            <person name="Goffeau A."/>
            <person name="Cadieu E."/>
            <person name="Dreano S."/>
            <person name="Gloux S."/>
            <person name="Lelaure V."/>
            <person name="Mottier S."/>
            <person name="Galibert F."/>
            <person name="Aves S.J."/>
            <person name="Xiang Z."/>
            <person name="Hunt C."/>
            <person name="Moore K."/>
            <person name="Hurst S.M."/>
            <person name="Lucas M."/>
            <person name="Rochet M."/>
            <person name="Gaillardin C."/>
            <person name="Tallada V.A."/>
            <person name="Garzon A."/>
            <person name="Thode G."/>
            <person name="Daga R.R."/>
            <person name="Cruzado L."/>
            <person name="Jimenez J."/>
            <person name="Sanchez M."/>
            <person name="del Rey F."/>
            <person name="Benito J."/>
            <person name="Dominguez A."/>
            <person name="Revuelta J.L."/>
            <person name="Moreno S."/>
            <person name="Armstrong J."/>
            <person name="Forsburg S.L."/>
            <person name="Cerutti L."/>
            <person name="Lowe T."/>
            <person name="McCombie W.R."/>
            <person name="Paulsen I."/>
            <person name="Potashkin J."/>
            <person name="Shpakovski G.V."/>
            <person name="Ussery D."/>
            <person name="Barrell B.G."/>
            <person name="Nurse P."/>
        </authorList>
    </citation>
    <scope>NUCLEOTIDE SEQUENCE [LARGE SCALE GENOMIC DNA]</scope>
    <source>
        <strain>972 / ATCC 24843</strain>
    </source>
</reference>
<sequence length="572" mass="62615">MKDNQQAVQLQQPTTIGHYLAVRLAQAGVKHHFVVPGDYNLGLLDKLQYNNYLEEVNCANELNCAFAAEGYARANGIAACVVTYSVGAFTAFDGIGGAYAEDLPVILISGSPNTNDIGSSHLLHHTLGTHDFSYQYEMAKKITCAAVSIQRPTEAPRLIDYAIKMALLKKKPVYIEVPTNVASQPCAAPGPASLITEPETSNQEYLQMAVDISAKIVNGKQKPVLLAGPKLRSFKAESAFLELANSLNCSVAVMPNAKSFFPESHPNYAGIYWGQASTLGAESIINWSDCIICAGTTFTDYSSNGWTSLPPKANVLHVDVDRVTVSDAEFGGVLLRDFLHELAKKVKANNASVVEYKRIRPESLEIPMENPKAALNRKEIIRQVQNLVNQETTLFVDTGDSWFGGMRITLPEKARFEIEMQWGHIGWSVPSAFGYAIGAPKRNVVVFVGDGSFQETVQEVSQMVRLNLPIIMFLINNRGYTIEVEIHDGPYNRIKNWDYAAIVEAFNAGEGHAKGFRVGNGHELAEAIRQAKENSQGPTLIECNIDQDDCSKELINWGHNVGAANGKPPAKE</sequence>
<proteinExistence type="inferred from homology"/>
<organism>
    <name type="scientific">Schizosaccharomyces pombe (strain 972 / ATCC 24843)</name>
    <name type="common">Fission yeast</name>
    <dbReference type="NCBI Taxonomy" id="284812"/>
    <lineage>
        <taxon>Eukaryota</taxon>
        <taxon>Fungi</taxon>
        <taxon>Dikarya</taxon>
        <taxon>Ascomycota</taxon>
        <taxon>Taphrinomycotina</taxon>
        <taxon>Schizosaccharomycetes</taxon>
        <taxon>Schizosaccharomycetales</taxon>
        <taxon>Schizosaccharomycetaceae</taxon>
        <taxon>Schizosaccharomyces</taxon>
    </lineage>
</organism>
<dbReference type="EC" id="4.1.1.1"/>
<dbReference type="EMBL" id="CU329670">
    <property type="protein sequence ID" value="CAB75873.1"/>
    <property type="molecule type" value="Genomic_DNA"/>
</dbReference>
<dbReference type="PIR" id="T50136">
    <property type="entry name" value="T50136"/>
</dbReference>
<dbReference type="SMR" id="Q9P7P6"/>
<dbReference type="BioGRID" id="279056">
    <property type="interactions" value="16"/>
</dbReference>
<dbReference type="FunCoup" id="Q9P7P6">
    <property type="interactions" value="434"/>
</dbReference>
<dbReference type="STRING" id="284812.Q9P7P6"/>
<dbReference type="PaxDb" id="4896-SPAC186.09.1"/>
<dbReference type="EnsemblFungi" id="SPAC186.09.1">
    <property type="protein sequence ID" value="SPAC186.09.1:pep"/>
    <property type="gene ID" value="SPAC186.09"/>
</dbReference>
<dbReference type="KEGG" id="spo:2542602"/>
<dbReference type="PomBase" id="SPAC186.09"/>
<dbReference type="VEuPathDB" id="FungiDB:SPAC186.09"/>
<dbReference type="eggNOG" id="KOG1184">
    <property type="taxonomic scope" value="Eukaryota"/>
</dbReference>
<dbReference type="HOGENOM" id="CLU_013748_0_2_1"/>
<dbReference type="InParanoid" id="Q9P7P6"/>
<dbReference type="OMA" id="SESHEQY"/>
<dbReference type="PhylomeDB" id="Q9P7P6"/>
<dbReference type="PRO" id="PR:Q9P7P6"/>
<dbReference type="Proteomes" id="UP000002485">
    <property type="component" value="Chromosome I"/>
</dbReference>
<dbReference type="GO" id="GO:0005829">
    <property type="term" value="C:cytosol"/>
    <property type="evidence" value="ECO:0007005"/>
    <property type="project" value="PomBase"/>
</dbReference>
<dbReference type="GO" id="GO:0005634">
    <property type="term" value="C:nucleus"/>
    <property type="evidence" value="ECO:0007005"/>
    <property type="project" value="PomBase"/>
</dbReference>
<dbReference type="GO" id="GO:0000287">
    <property type="term" value="F:magnesium ion binding"/>
    <property type="evidence" value="ECO:0007669"/>
    <property type="project" value="InterPro"/>
</dbReference>
<dbReference type="GO" id="GO:0004737">
    <property type="term" value="F:pyruvate decarboxylase activity"/>
    <property type="evidence" value="ECO:0000318"/>
    <property type="project" value="GO_Central"/>
</dbReference>
<dbReference type="GO" id="GO:0030976">
    <property type="term" value="F:thiamine pyrophosphate binding"/>
    <property type="evidence" value="ECO:0007669"/>
    <property type="project" value="InterPro"/>
</dbReference>
<dbReference type="GO" id="GO:0000949">
    <property type="term" value="P:aromatic amino acid family catabolic process to alcohol via Ehrlich pathway"/>
    <property type="evidence" value="ECO:0000318"/>
    <property type="project" value="GO_Central"/>
</dbReference>
<dbReference type="GO" id="GO:0006113">
    <property type="term" value="P:fermentation"/>
    <property type="evidence" value="ECO:0000305"/>
    <property type="project" value="PomBase"/>
</dbReference>
<dbReference type="CDD" id="cd02005">
    <property type="entry name" value="TPP_PDC_IPDC"/>
    <property type="match status" value="1"/>
</dbReference>
<dbReference type="CDD" id="cd07038">
    <property type="entry name" value="TPP_PYR_PDC_IPDC_like"/>
    <property type="match status" value="1"/>
</dbReference>
<dbReference type="FunFam" id="3.40.50.1220:FF:000009">
    <property type="entry name" value="Pyruvate decarboxylase 1"/>
    <property type="match status" value="1"/>
</dbReference>
<dbReference type="FunFam" id="3.40.50.970:FF:000019">
    <property type="entry name" value="Pyruvate decarboxylase isozyme"/>
    <property type="match status" value="1"/>
</dbReference>
<dbReference type="FunFam" id="3.40.50.970:FF:000024">
    <property type="entry name" value="Pyruvate decarboxylase isozyme"/>
    <property type="match status" value="1"/>
</dbReference>
<dbReference type="Gene3D" id="3.40.50.970">
    <property type="match status" value="2"/>
</dbReference>
<dbReference type="Gene3D" id="3.40.50.1220">
    <property type="entry name" value="TPP-binding domain"/>
    <property type="match status" value="1"/>
</dbReference>
<dbReference type="InterPro" id="IPR029035">
    <property type="entry name" value="DHS-like_NAD/FAD-binding_dom"/>
</dbReference>
<dbReference type="InterPro" id="IPR012110">
    <property type="entry name" value="PDC/IPDC-like"/>
</dbReference>
<dbReference type="InterPro" id="IPR029061">
    <property type="entry name" value="THDP-binding"/>
</dbReference>
<dbReference type="InterPro" id="IPR012000">
    <property type="entry name" value="Thiamin_PyroP_enz_cen_dom"/>
</dbReference>
<dbReference type="InterPro" id="IPR012001">
    <property type="entry name" value="Thiamin_PyroP_enz_TPP-bd_dom"/>
</dbReference>
<dbReference type="InterPro" id="IPR000399">
    <property type="entry name" value="TPP-bd_CS"/>
</dbReference>
<dbReference type="InterPro" id="IPR011766">
    <property type="entry name" value="TPP_enzyme_TPP-bd"/>
</dbReference>
<dbReference type="InterPro" id="IPR047214">
    <property type="entry name" value="TPP_PDC_IPDC"/>
</dbReference>
<dbReference type="InterPro" id="IPR047213">
    <property type="entry name" value="TPP_PYR_PDC_IPDC-like"/>
</dbReference>
<dbReference type="PANTHER" id="PTHR43452">
    <property type="entry name" value="PYRUVATE DECARBOXYLASE"/>
    <property type="match status" value="1"/>
</dbReference>
<dbReference type="PANTHER" id="PTHR43452:SF1">
    <property type="entry name" value="PYRUVATE DECARBOXYLASE C186.09-RELATED"/>
    <property type="match status" value="1"/>
</dbReference>
<dbReference type="Pfam" id="PF02775">
    <property type="entry name" value="TPP_enzyme_C"/>
    <property type="match status" value="1"/>
</dbReference>
<dbReference type="Pfam" id="PF00205">
    <property type="entry name" value="TPP_enzyme_M"/>
    <property type="match status" value="1"/>
</dbReference>
<dbReference type="Pfam" id="PF02776">
    <property type="entry name" value="TPP_enzyme_N"/>
    <property type="match status" value="1"/>
</dbReference>
<dbReference type="PIRSF" id="PIRSF036565">
    <property type="entry name" value="Pyruvt_ip_decrb"/>
    <property type="match status" value="1"/>
</dbReference>
<dbReference type="SUPFAM" id="SSF52467">
    <property type="entry name" value="DHS-like NAD/FAD-binding domain"/>
    <property type="match status" value="1"/>
</dbReference>
<dbReference type="SUPFAM" id="SSF52518">
    <property type="entry name" value="Thiamin diphosphate-binding fold (THDP-binding)"/>
    <property type="match status" value="2"/>
</dbReference>
<dbReference type="PROSITE" id="PS00187">
    <property type="entry name" value="TPP_ENZYMES"/>
    <property type="match status" value="1"/>
</dbReference>
<protein>
    <recommendedName>
        <fullName>Probable pyruvate decarboxylase C186.09</fullName>
        <ecNumber>4.1.1.1</ecNumber>
    </recommendedName>
</protein>
<keyword id="KW-0210">Decarboxylase</keyword>
<keyword id="KW-0456">Lyase</keyword>
<keyword id="KW-0460">Magnesium</keyword>
<keyword id="KW-0479">Metal-binding</keyword>
<keyword id="KW-1185">Reference proteome</keyword>
<keyword id="KW-0786">Thiamine pyrophosphate</keyword>
<feature type="chain" id="PRO_0000090769" description="Probable pyruvate decarboxylase C186.09">
    <location>
        <begin position="1"/>
        <end position="572"/>
    </location>
</feature>
<feature type="region of interest" description="Thiamine pyrophosphate binding">
    <location>
        <begin position="400"/>
        <end position="482"/>
    </location>
</feature>
<feature type="binding site" evidence="1">
    <location>
        <position position="38"/>
    </location>
    <ligand>
        <name>substrate</name>
    </ligand>
</feature>
<feature type="binding site" evidence="1">
    <location>
        <position position="125"/>
    </location>
    <ligand>
        <name>substrate</name>
    </ligand>
</feature>
<feature type="binding site" evidence="1">
    <location>
        <position position="450"/>
    </location>
    <ligand>
        <name>Mg(2+)</name>
        <dbReference type="ChEBI" id="CHEBI:18420"/>
    </ligand>
</feature>
<feature type="binding site" evidence="1">
    <location>
        <position position="477"/>
    </location>
    <ligand>
        <name>Mg(2+)</name>
        <dbReference type="ChEBI" id="CHEBI:18420"/>
    </ligand>
</feature>
<feature type="binding site" evidence="1">
    <location>
        <position position="479"/>
    </location>
    <ligand>
        <name>Mg(2+)</name>
        <dbReference type="ChEBI" id="CHEBI:18420"/>
    </ligand>
</feature>
<feature type="binding site" evidence="1">
    <location>
        <position position="483"/>
    </location>
    <ligand>
        <name>substrate</name>
    </ligand>
</feature>
<name>PDC3_SCHPO</name>
<accession>Q9P7P6</accession>
<comment type="catalytic activity">
    <reaction>
        <text>a 2-oxocarboxylate + H(+) = an aldehyde + CO2</text>
        <dbReference type="Rhea" id="RHEA:11628"/>
        <dbReference type="ChEBI" id="CHEBI:15378"/>
        <dbReference type="ChEBI" id="CHEBI:16526"/>
        <dbReference type="ChEBI" id="CHEBI:17478"/>
        <dbReference type="ChEBI" id="CHEBI:35179"/>
        <dbReference type="EC" id="4.1.1.1"/>
    </reaction>
</comment>
<comment type="cofactor">
    <cofactor>
        <name>a metal cation</name>
        <dbReference type="ChEBI" id="CHEBI:25213"/>
    </cofactor>
    <text>Binds 1 metal ion per subunit.</text>
</comment>
<comment type="cofactor">
    <cofactor>
        <name>thiamine diphosphate</name>
        <dbReference type="ChEBI" id="CHEBI:58937"/>
    </cofactor>
    <text>Binds 1 thiamine pyrophosphate per subunit.</text>
</comment>
<comment type="subunit">
    <text evidence="1">Homotetramer.</text>
</comment>
<comment type="similarity">
    <text evidence="2">Belongs to the TPP enzyme family.</text>
</comment>
<evidence type="ECO:0000250" key="1"/>
<evidence type="ECO:0000305" key="2"/>
<gene>
    <name type="ORF">SPAC186.09</name>
</gene>